<comment type="function">
    <text evidence="1">Catalyzes the attachment of glutamate to tRNA(Glu) in a two-step reaction: glutamate is first activated by ATP to form Glu-AMP and then transferred to the acceptor end of tRNA(Glu).</text>
</comment>
<comment type="catalytic activity">
    <reaction evidence="1">
        <text>tRNA(Glu) + L-glutamate + ATP = L-glutamyl-tRNA(Glu) + AMP + diphosphate</text>
        <dbReference type="Rhea" id="RHEA:23540"/>
        <dbReference type="Rhea" id="RHEA-COMP:9663"/>
        <dbReference type="Rhea" id="RHEA-COMP:9680"/>
        <dbReference type="ChEBI" id="CHEBI:29985"/>
        <dbReference type="ChEBI" id="CHEBI:30616"/>
        <dbReference type="ChEBI" id="CHEBI:33019"/>
        <dbReference type="ChEBI" id="CHEBI:78442"/>
        <dbReference type="ChEBI" id="CHEBI:78520"/>
        <dbReference type="ChEBI" id="CHEBI:456215"/>
        <dbReference type="EC" id="6.1.1.17"/>
    </reaction>
</comment>
<comment type="subunit">
    <text evidence="1">Monomer.</text>
</comment>
<comment type="subcellular location">
    <subcellularLocation>
        <location evidence="1">Cytoplasm</location>
    </subcellularLocation>
</comment>
<comment type="similarity">
    <text evidence="1">Belongs to the class-I aminoacyl-tRNA synthetase family. Glutamate--tRNA ligase type 1 subfamily.</text>
</comment>
<gene>
    <name evidence="1" type="primary">gltX</name>
    <name type="ordered locus">COSY_0437</name>
</gene>
<keyword id="KW-0030">Aminoacyl-tRNA synthetase</keyword>
<keyword id="KW-0067">ATP-binding</keyword>
<keyword id="KW-0963">Cytoplasm</keyword>
<keyword id="KW-0436">Ligase</keyword>
<keyword id="KW-0547">Nucleotide-binding</keyword>
<keyword id="KW-0648">Protein biosynthesis</keyword>
<keyword id="KW-1185">Reference proteome</keyword>
<organism>
    <name type="scientific">Vesicomyosocius okutanii subsp. Calyptogena okutanii (strain HA)</name>
    <dbReference type="NCBI Taxonomy" id="412965"/>
    <lineage>
        <taxon>Bacteria</taxon>
        <taxon>Pseudomonadati</taxon>
        <taxon>Pseudomonadota</taxon>
        <taxon>Gammaproteobacteria</taxon>
        <taxon>Candidatus Pseudothioglobaceae</taxon>
        <taxon>Candidatus Vesicomyosocius</taxon>
    </lineage>
</organism>
<dbReference type="EC" id="6.1.1.17" evidence="1"/>
<dbReference type="EMBL" id="AP009247">
    <property type="protein sequence ID" value="BAF61556.1"/>
    <property type="molecule type" value="Genomic_DNA"/>
</dbReference>
<dbReference type="RefSeq" id="WP_011929826.1">
    <property type="nucleotide sequence ID" value="NC_009465.1"/>
</dbReference>
<dbReference type="SMR" id="A5CWX9"/>
<dbReference type="STRING" id="412965.COSY_0437"/>
<dbReference type="KEGG" id="vok:COSY_0437"/>
<dbReference type="eggNOG" id="COG0008">
    <property type="taxonomic scope" value="Bacteria"/>
</dbReference>
<dbReference type="HOGENOM" id="CLU_015768_6_0_6"/>
<dbReference type="Proteomes" id="UP000000247">
    <property type="component" value="Chromosome"/>
</dbReference>
<dbReference type="GO" id="GO:0005829">
    <property type="term" value="C:cytosol"/>
    <property type="evidence" value="ECO:0007669"/>
    <property type="project" value="TreeGrafter"/>
</dbReference>
<dbReference type="GO" id="GO:0005524">
    <property type="term" value="F:ATP binding"/>
    <property type="evidence" value="ECO:0007669"/>
    <property type="project" value="UniProtKB-UniRule"/>
</dbReference>
<dbReference type="GO" id="GO:0004818">
    <property type="term" value="F:glutamate-tRNA ligase activity"/>
    <property type="evidence" value="ECO:0007669"/>
    <property type="project" value="UniProtKB-UniRule"/>
</dbReference>
<dbReference type="GO" id="GO:0000049">
    <property type="term" value="F:tRNA binding"/>
    <property type="evidence" value="ECO:0007669"/>
    <property type="project" value="InterPro"/>
</dbReference>
<dbReference type="GO" id="GO:0008270">
    <property type="term" value="F:zinc ion binding"/>
    <property type="evidence" value="ECO:0007669"/>
    <property type="project" value="InterPro"/>
</dbReference>
<dbReference type="GO" id="GO:0006424">
    <property type="term" value="P:glutamyl-tRNA aminoacylation"/>
    <property type="evidence" value="ECO:0007669"/>
    <property type="project" value="UniProtKB-UniRule"/>
</dbReference>
<dbReference type="CDD" id="cd00808">
    <property type="entry name" value="GluRS_core"/>
    <property type="match status" value="1"/>
</dbReference>
<dbReference type="FunFam" id="3.40.50.620:FF:000007">
    <property type="entry name" value="Glutamate--tRNA ligase"/>
    <property type="match status" value="1"/>
</dbReference>
<dbReference type="Gene3D" id="1.10.10.350">
    <property type="match status" value="1"/>
</dbReference>
<dbReference type="Gene3D" id="3.40.50.620">
    <property type="entry name" value="HUPs"/>
    <property type="match status" value="1"/>
</dbReference>
<dbReference type="HAMAP" id="MF_00022">
    <property type="entry name" value="Glu_tRNA_synth_type1"/>
    <property type="match status" value="1"/>
</dbReference>
<dbReference type="InterPro" id="IPR045462">
    <property type="entry name" value="aa-tRNA-synth_I_cd-bd"/>
</dbReference>
<dbReference type="InterPro" id="IPR020751">
    <property type="entry name" value="aa-tRNA-synth_I_codon-bd_sub2"/>
</dbReference>
<dbReference type="InterPro" id="IPR001412">
    <property type="entry name" value="aa-tRNA-synth_I_CS"/>
</dbReference>
<dbReference type="InterPro" id="IPR008925">
    <property type="entry name" value="aa_tRNA-synth_I_cd-bd_sf"/>
</dbReference>
<dbReference type="InterPro" id="IPR004527">
    <property type="entry name" value="Glu-tRNA-ligase_bac/mito"/>
</dbReference>
<dbReference type="InterPro" id="IPR000924">
    <property type="entry name" value="Glu/Gln-tRNA-synth"/>
</dbReference>
<dbReference type="InterPro" id="IPR020058">
    <property type="entry name" value="Glu/Gln-tRNA-synth_Ib_cat-dom"/>
</dbReference>
<dbReference type="InterPro" id="IPR049940">
    <property type="entry name" value="GluQ/Sye"/>
</dbReference>
<dbReference type="InterPro" id="IPR033910">
    <property type="entry name" value="GluRS_core"/>
</dbReference>
<dbReference type="InterPro" id="IPR014729">
    <property type="entry name" value="Rossmann-like_a/b/a_fold"/>
</dbReference>
<dbReference type="NCBIfam" id="TIGR00464">
    <property type="entry name" value="gltX_bact"/>
    <property type="match status" value="1"/>
</dbReference>
<dbReference type="PANTHER" id="PTHR43311">
    <property type="entry name" value="GLUTAMATE--TRNA LIGASE"/>
    <property type="match status" value="1"/>
</dbReference>
<dbReference type="PANTHER" id="PTHR43311:SF2">
    <property type="entry name" value="GLUTAMATE--TRNA LIGASE, MITOCHONDRIAL-RELATED"/>
    <property type="match status" value="1"/>
</dbReference>
<dbReference type="Pfam" id="PF19269">
    <property type="entry name" value="Anticodon_2"/>
    <property type="match status" value="1"/>
</dbReference>
<dbReference type="Pfam" id="PF00749">
    <property type="entry name" value="tRNA-synt_1c"/>
    <property type="match status" value="1"/>
</dbReference>
<dbReference type="PRINTS" id="PR00987">
    <property type="entry name" value="TRNASYNTHGLU"/>
</dbReference>
<dbReference type="SUPFAM" id="SSF48163">
    <property type="entry name" value="An anticodon-binding domain of class I aminoacyl-tRNA synthetases"/>
    <property type="match status" value="1"/>
</dbReference>
<dbReference type="SUPFAM" id="SSF52374">
    <property type="entry name" value="Nucleotidylyl transferase"/>
    <property type="match status" value="1"/>
</dbReference>
<dbReference type="PROSITE" id="PS00178">
    <property type="entry name" value="AA_TRNA_LIGASE_I"/>
    <property type="match status" value="1"/>
</dbReference>
<reference key="1">
    <citation type="journal article" date="2007" name="Curr. Biol.">
        <title>Reduced genome of the thioautotrophic intracellular symbiont in a deep-sea clam, Calyptogena okutanii.</title>
        <authorList>
            <person name="Kuwahara H."/>
            <person name="Yoshida T."/>
            <person name="Takaki Y."/>
            <person name="Shimamura S."/>
            <person name="Nishi S."/>
            <person name="Harada M."/>
            <person name="Matsuyama K."/>
            <person name="Takishita K."/>
            <person name="Kawato M."/>
            <person name="Uematsu K."/>
            <person name="Fujiwara Y."/>
            <person name="Sato T."/>
            <person name="Kato C."/>
            <person name="Kitagawa M."/>
            <person name="Kato I."/>
            <person name="Maruyama T."/>
        </authorList>
    </citation>
    <scope>NUCLEOTIDE SEQUENCE [LARGE SCALE GENOMIC DNA]</scope>
    <source>
        <strain>HA</strain>
    </source>
</reference>
<evidence type="ECO:0000255" key="1">
    <source>
        <dbReference type="HAMAP-Rule" id="MF_00022"/>
    </source>
</evidence>
<feature type="chain" id="PRO_0000331002" description="Glutamate--tRNA ligase">
    <location>
        <begin position="1"/>
        <end position="455"/>
    </location>
</feature>
<feature type="short sequence motif" description="'HIGH' region" evidence="1">
    <location>
        <begin position="8"/>
        <end position="18"/>
    </location>
</feature>
<feature type="short sequence motif" description="'KMSKS' region" evidence="1">
    <location>
        <begin position="231"/>
        <end position="235"/>
    </location>
</feature>
<feature type="binding site" evidence="1">
    <location>
        <position position="234"/>
    </location>
    <ligand>
        <name>ATP</name>
        <dbReference type="ChEBI" id="CHEBI:30616"/>
    </ligand>
</feature>
<name>SYE_VESOH</name>
<sequence>MIKSRFAPSPTGYLHIGGARTAFFAWIWAKKQHGKFVLRIENTDLERSTQASVDAILQGIDWLGLNYDEGPLYQTDRFDRYKQIIQQLLDEKKAYYCECSKKRLQILREELTKQGKKAKYDGCCRNKNLHTGVVRFNNPKEGIVVFNDVVKGKISINNQELDDLIIARSDNTPTYNLTVVVDDHDMKINIIIRGDDHINNTPKQINLYQALGWHLPEFAHLPMILGNDGIRLSKRHGAVSIMAYRDAGFLPEALLNYLSRLGWSYGNQEIFSINKIVQLFELKNINKASASFNQDKLLWFNQETIKSSSVKNLLSNLTWHLQNQEIIIKDTPNIEIVVRYLQDRCKTLVNMAGELKMFYQDFDTFDEKLAKKFFKDKTPLKRLFVELEMLNTWKADNIKQVVKQVCFELNIGFGRVGQPFRLALSGDGNAGSIDIVAELVGKNKALLRLKMAIDF</sequence>
<accession>A5CWX9</accession>
<protein>
    <recommendedName>
        <fullName evidence="1">Glutamate--tRNA ligase</fullName>
        <ecNumber evidence="1">6.1.1.17</ecNumber>
    </recommendedName>
    <alternativeName>
        <fullName evidence="1">Glutamyl-tRNA synthetase</fullName>
        <shortName evidence="1">GluRS</shortName>
    </alternativeName>
</protein>
<proteinExistence type="inferred from homology"/>